<dbReference type="EMBL" id="CP000742">
    <property type="protein sequence ID" value="ABR54998.1"/>
    <property type="molecule type" value="Genomic_DNA"/>
</dbReference>
<dbReference type="RefSeq" id="WP_012065913.1">
    <property type="nucleotide sequence ID" value="NC_009634.1"/>
</dbReference>
<dbReference type="SMR" id="A6UR76"/>
<dbReference type="STRING" id="406327.Mevan_1098"/>
<dbReference type="GeneID" id="5324537"/>
<dbReference type="KEGG" id="mvn:Mevan_1098"/>
<dbReference type="eggNOG" id="arCOG04554">
    <property type="taxonomic scope" value="Archaea"/>
</dbReference>
<dbReference type="HOGENOM" id="CLU_125807_0_1_2"/>
<dbReference type="OrthoDB" id="17771at2157"/>
<dbReference type="Proteomes" id="UP000001107">
    <property type="component" value="Chromosome"/>
</dbReference>
<dbReference type="GO" id="GO:0003677">
    <property type="term" value="F:DNA binding"/>
    <property type="evidence" value="ECO:0007669"/>
    <property type="project" value="UniProtKB-KW"/>
</dbReference>
<dbReference type="GO" id="GO:0003700">
    <property type="term" value="F:DNA-binding transcription factor activity"/>
    <property type="evidence" value="ECO:0007669"/>
    <property type="project" value="UniProtKB-UniRule"/>
</dbReference>
<dbReference type="GO" id="GO:0006352">
    <property type="term" value="P:DNA-templated transcription initiation"/>
    <property type="evidence" value="ECO:0007669"/>
    <property type="project" value="InterPro"/>
</dbReference>
<dbReference type="Gene3D" id="3.30.1190.10">
    <property type="entry name" value="DNA-binding protein Tfx superfamily, archaea"/>
    <property type="match status" value="1"/>
</dbReference>
<dbReference type="HAMAP" id="MF_00620">
    <property type="entry name" value="HTH_type_Tfx"/>
    <property type="match status" value="1"/>
</dbReference>
<dbReference type="InterPro" id="IPR007630">
    <property type="entry name" value="RNA_pol_sigma70_r4"/>
</dbReference>
<dbReference type="InterPro" id="IPR029291">
    <property type="entry name" value="Tfx_C"/>
</dbReference>
<dbReference type="InterPro" id="IPR004645">
    <property type="entry name" value="Tfx_DNA-bd_arc"/>
</dbReference>
<dbReference type="InterPro" id="IPR018384">
    <property type="entry name" value="Tfx_DNA-bd_euryarc"/>
</dbReference>
<dbReference type="InterPro" id="IPR036657">
    <property type="entry name" value="Tfx_DNA-bd_sf_arc"/>
</dbReference>
<dbReference type="NCBIfam" id="NF003055">
    <property type="entry name" value="PRK03975.1-2"/>
    <property type="match status" value="1"/>
</dbReference>
<dbReference type="NCBIfam" id="NF003056">
    <property type="entry name" value="PRK03975.1-4"/>
    <property type="match status" value="1"/>
</dbReference>
<dbReference type="NCBIfam" id="TIGR00721">
    <property type="entry name" value="tfx"/>
    <property type="match status" value="1"/>
</dbReference>
<dbReference type="Pfam" id="PF04545">
    <property type="entry name" value="Sigma70_r4"/>
    <property type="match status" value="1"/>
</dbReference>
<dbReference type="Pfam" id="PF14601">
    <property type="entry name" value="TFX_C"/>
    <property type="match status" value="1"/>
</dbReference>
<dbReference type="PIRSF" id="PIRSF004932">
    <property type="entry name" value="DNA_bind_Tfx"/>
    <property type="match status" value="1"/>
</dbReference>
<dbReference type="SUPFAM" id="SSF89915">
    <property type="entry name" value="DNA-binding protein Tfx"/>
    <property type="match status" value="1"/>
</dbReference>
<comment type="function">
    <text evidence="1">Putative transcriptional regulator.</text>
</comment>
<comment type="similarity">
    <text evidence="1">Belongs to the Tfx family.</text>
</comment>
<gene>
    <name type="ordered locus">Mevan_1098</name>
</gene>
<sequence>MESFLTEIQIRVLNLRKKGHTQEEIAHVMGTSRANISMVEKRARENIEKAKNTLNIYNDIIAPSKIKVEKGTDVFNIPNVIFSKSDEEEIHVNYSSLQIMEFINQNAKRYIKNRMVVEPFIITILQNGEIYVHDFEEEKAKN</sequence>
<name>Y1098_METVS</name>
<evidence type="ECO:0000255" key="1">
    <source>
        <dbReference type="HAMAP-Rule" id="MF_00620"/>
    </source>
</evidence>
<reference key="1">
    <citation type="submission" date="2007-06" db="EMBL/GenBank/DDBJ databases">
        <title>Complete sequence of Methanococcus vannielii SB.</title>
        <authorList>
            <consortium name="US DOE Joint Genome Institute"/>
            <person name="Copeland A."/>
            <person name="Lucas S."/>
            <person name="Lapidus A."/>
            <person name="Barry K."/>
            <person name="Glavina del Rio T."/>
            <person name="Dalin E."/>
            <person name="Tice H."/>
            <person name="Pitluck S."/>
            <person name="Chain P."/>
            <person name="Malfatti S."/>
            <person name="Shin M."/>
            <person name="Vergez L."/>
            <person name="Schmutz J."/>
            <person name="Larimer F."/>
            <person name="Land M."/>
            <person name="Hauser L."/>
            <person name="Kyrpides N."/>
            <person name="Anderson I."/>
            <person name="Sieprawska-Lupa M."/>
            <person name="Whitman W.B."/>
            <person name="Richardson P."/>
        </authorList>
    </citation>
    <scope>NUCLEOTIDE SEQUENCE [LARGE SCALE GENOMIC DNA]</scope>
    <source>
        <strain>ATCC 35089 / DSM 1224 / JCM 13029 / OCM 148 / SB</strain>
    </source>
</reference>
<accession>A6UR76</accession>
<organism>
    <name type="scientific">Methanococcus vannielii (strain ATCC 35089 / DSM 1224 / JCM 13029 / OCM 148 / SB)</name>
    <dbReference type="NCBI Taxonomy" id="406327"/>
    <lineage>
        <taxon>Archaea</taxon>
        <taxon>Methanobacteriati</taxon>
        <taxon>Methanobacteriota</taxon>
        <taxon>Methanomada group</taxon>
        <taxon>Methanococci</taxon>
        <taxon>Methanococcales</taxon>
        <taxon>Methanococcaceae</taxon>
        <taxon>Methanococcus</taxon>
    </lineage>
</organism>
<protein>
    <recommendedName>
        <fullName evidence="1">Putative transcriptional regulatory protein Mevan_1098</fullName>
    </recommendedName>
</protein>
<proteinExistence type="inferred from homology"/>
<feature type="chain" id="PRO_1000051529" description="Putative transcriptional regulatory protein Mevan_1098">
    <location>
        <begin position="1"/>
        <end position="142"/>
    </location>
</feature>
<keyword id="KW-0238">DNA-binding</keyword>
<keyword id="KW-0804">Transcription</keyword>
<keyword id="KW-0805">Transcription regulation</keyword>